<name>SYK_MYCS5</name>
<sequence>MSIKLTEQEQIRLSKLDTYKKLNINPFEKIEKNLNYVYSKDLKEKYSSYSKEELESMDLYFDLYGRITSQRGPFIVIKDYFDKIQLYFNKKEHLDLAELVSNLDLGDIIHAHGKLSKTNTGELVVKIKTLKLLTKVLKPLPDKFHGLSDIEEIYRHRYLDLISNEHSMEVFKKRSKIISLIRKYFDSNMYLEVETPFLSNYISGAAAKPFKTFHNALSQEFTLRIATEIPLKKLLIGGIDRVYEMGRIFRNEGIDTTHNPEFTTIEFYEAYSNLEKMMQRTEELFKLIAKELNLKTLQNKGEEINLEEPFKRVDMIDEVSKATGVDFRNVTLEKALELAKEHGVKLKKYYTVGHIANELFEKLIEKTLVQPTFVMGHPIEISPLTYEASDPRYVERAELFINGKEYANMYTELSSPIEQLKRFEDQLNEKAQGNDESSDIDWDFIEALKYGMPPAGGCGIGIDRLVMLFTEKESIRDVLFFPTLKNKKSQG</sequence>
<comment type="catalytic activity">
    <reaction evidence="1">
        <text>tRNA(Lys) + L-lysine + ATP = L-lysyl-tRNA(Lys) + AMP + diphosphate</text>
        <dbReference type="Rhea" id="RHEA:20792"/>
        <dbReference type="Rhea" id="RHEA-COMP:9696"/>
        <dbReference type="Rhea" id="RHEA-COMP:9697"/>
        <dbReference type="ChEBI" id="CHEBI:30616"/>
        <dbReference type="ChEBI" id="CHEBI:32551"/>
        <dbReference type="ChEBI" id="CHEBI:33019"/>
        <dbReference type="ChEBI" id="CHEBI:78442"/>
        <dbReference type="ChEBI" id="CHEBI:78529"/>
        <dbReference type="ChEBI" id="CHEBI:456215"/>
        <dbReference type="EC" id="6.1.1.6"/>
    </reaction>
</comment>
<comment type="cofactor">
    <cofactor evidence="1">
        <name>Mg(2+)</name>
        <dbReference type="ChEBI" id="CHEBI:18420"/>
    </cofactor>
    <text evidence="1">Binds 3 Mg(2+) ions per subunit.</text>
</comment>
<comment type="subunit">
    <text evidence="1">Homodimer.</text>
</comment>
<comment type="subcellular location">
    <subcellularLocation>
        <location evidence="1">Cytoplasm</location>
    </subcellularLocation>
</comment>
<comment type="similarity">
    <text evidence="1">Belongs to the class-II aminoacyl-tRNA synthetase family.</text>
</comment>
<organism>
    <name type="scientific">Mycoplasmopsis synoviae (strain 53)</name>
    <name type="common">Mycoplasma synoviae</name>
    <dbReference type="NCBI Taxonomy" id="262723"/>
    <lineage>
        <taxon>Bacteria</taxon>
        <taxon>Bacillati</taxon>
        <taxon>Mycoplasmatota</taxon>
        <taxon>Mycoplasmoidales</taxon>
        <taxon>Metamycoplasmataceae</taxon>
        <taxon>Mycoplasmopsis</taxon>
    </lineage>
</organism>
<evidence type="ECO:0000255" key="1">
    <source>
        <dbReference type="HAMAP-Rule" id="MF_00252"/>
    </source>
</evidence>
<keyword id="KW-0030">Aminoacyl-tRNA synthetase</keyword>
<keyword id="KW-0067">ATP-binding</keyword>
<keyword id="KW-0963">Cytoplasm</keyword>
<keyword id="KW-0436">Ligase</keyword>
<keyword id="KW-0460">Magnesium</keyword>
<keyword id="KW-0479">Metal-binding</keyword>
<keyword id="KW-0547">Nucleotide-binding</keyword>
<keyword id="KW-0648">Protein biosynthesis</keyword>
<keyword id="KW-1185">Reference proteome</keyword>
<reference key="1">
    <citation type="journal article" date="2005" name="J. Bacteriol.">
        <title>Swine and poultry pathogens: the complete genome sequences of two strains of Mycoplasma hyopneumoniae and a strain of Mycoplasma synoviae.</title>
        <authorList>
            <person name="Vasconcelos A.T.R."/>
            <person name="Ferreira H.B."/>
            <person name="Bizarro C.V."/>
            <person name="Bonatto S.L."/>
            <person name="Carvalho M.O."/>
            <person name="Pinto P.M."/>
            <person name="Almeida D.F."/>
            <person name="Almeida L.G.P."/>
            <person name="Almeida R."/>
            <person name="Alves-Junior L."/>
            <person name="Assuncao E.N."/>
            <person name="Azevedo V.A.C."/>
            <person name="Bogo M.R."/>
            <person name="Brigido M.M."/>
            <person name="Brocchi M."/>
            <person name="Burity H.A."/>
            <person name="Camargo A.A."/>
            <person name="Camargo S.S."/>
            <person name="Carepo M.S."/>
            <person name="Carraro D.M."/>
            <person name="de Mattos Cascardo J.C."/>
            <person name="Castro L.A."/>
            <person name="Cavalcanti G."/>
            <person name="Chemale G."/>
            <person name="Collevatti R.G."/>
            <person name="Cunha C.W."/>
            <person name="Dallagiovanna B."/>
            <person name="Dambros B.P."/>
            <person name="Dellagostin O.A."/>
            <person name="Falcao C."/>
            <person name="Fantinatti-Garboggini F."/>
            <person name="Felipe M.S.S."/>
            <person name="Fiorentin L."/>
            <person name="Franco G.R."/>
            <person name="Freitas N.S.A."/>
            <person name="Frias D."/>
            <person name="Grangeiro T.B."/>
            <person name="Grisard E.C."/>
            <person name="Guimaraes C.T."/>
            <person name="Hungria M."/>
            <person name="Jardim S.N."/>
            <person name="Krieger M.A."/>
            <person name="Laurino J.P."/>
            <person name="Lima L.F.A."/>
            <person name="Lopes M.I."/>
            <person name="Loreto E.L.S."/>
            <person name="Madeira H.M.F."/>
            <person name="Manfio G.P."/>
            <person name="Maranhao A.Q."/>
            <person name="Martinkovics C.T."/>
            <person name="Medeiros S.R.B."/>
            <person name="Moreira M.A.M."/>
            <person name="Neiva M."/>
            <person name="Ramalho-Neto C.E."/>
            <person name="Nicolas M.F."/>
            <person name="Oliveira S.C."/>
            <person name="Paixao R.F.C."/>
            <person name="Pedrosa F.O."/>
            <person name="Pena S.D.J."/>
            <person name="Pereira M."/>
            <person name="Pereira-Ferrari L."/>
            <person name="Piffer I."/>
            <person name="Pinto L.S."/>
            <person name="Potrich D.P."/>
            <person name="Salim A.C.M."/>
            <person name="Santos F.R."/>
            <person name="Schmitt R."/>
            <person name="Schneider M.P.C."/>
            <person name="Schrank A."/>
            <person name="Schrank I.S."/>
            <person name="Schuck A.F."/>
            <person name="Seuanez H.N."/>
            <person name="Silva D.W."/>
            <person name="Silva R."/>
            <person name="Silva S.C."/>
            <person name="Soares C.M.A."/>
            <person name="Souza K.R.L."/>
            <person name="Souza R.C."/>
            <person name="Staats C.C."/>
            <person name="Steffens M.B.R."/>
            <person name="Teixeira S.M.R."/>
            <person name="Urmenyi T.P."/>
            <person name="Vainstein M.H."/>
            <person name="Zuccherato L.W."/>
            <person name="Simpson A.J.G."/>
            <person name="Zaha A."/>
        </authorList>
    </citation>
    <scope>NUCLEOTIDE SEQUENCE [LARGE SCALE GENOMIC DNA]</scope>
    <source>
        <strain>53</strain>
    </source>
</reference>
<feature type="chain" id="PRO_1000199245" description="Lysine--tRNA ligase">
    <location>
        <begin position="1"/>
        <end position="491"/>
    </location>
</feature>
<feature type="binding site" evidence="1">
    <location>
        <position position="398"/>
    </location>
    <ligand>
        <name>Mg(2+)</name>
        <dbReference type="ChEBI" id="CHEBI:18420"/>
        <label>1</label>
    </ligand>
</feature>
<feature type="binding site" evidence="1">
    <location>
        <position position="405"/>
    </location>
    <ligand>
        <name>Mg(2+)</name>
        <dbReference type="ChEBI" id="CHEBI:18420"/>
        <label>1</label>
    </ligand>
</feature>
<feature type="binding site" evidence="1">
    <location>
        <position position="405"/>
    </location>
    <ligand>
        <name>Mg(2+)</name>
        <dbReference type="ChEBI" id="CHEBI:18420"/>
        <label>2</label>
    </ligand>
</feature>
<gene>
    <name evidence="1" type="primary">lysS</name>
    <name type="ordered locus">MS53_0611</name>
</gene>
<protein>
    <recommendedName>
        <fullName evidence="1">Lysine--tRNA ligase</fullName>
        <ecNumber evidence="1">6.1.1.6</ecNumber>
    </recommendedName>
    <alternativeName>
        <fullName evidence="1">Lysyl-tRNA synthetase</fullName>
        <shortName evidence="1">LysRS</shortName>
    </alternativeName>
</protein>
<dbReference type="EC" id="6.1.1.6" evidence="1"/>
<dbReference type="EMBL" id="AE017245">
    <property type="protein sequence ID" value="AAZ44018.2"/>
    <property type="molecule type" value="Genomic_DNA"/>
</dbReference>
<dbReference type="RefSeq" id="WP_041352116.1">
    <property type="nucleotide sequence ID" value="NC_007294.1"/>
</dbReference>
<dbReference type="SMR" id="Q4A5F3"/>
<dbReference type="STRING" id="262723.MS53_0611"/>
<dbReference type="KEGG" id="msy:MS53_0611"/>
<dbReference type="eggNOG" id="COG1190">
    <property type="taxonomic scope" value="Bacteria"/>
</dbReference>
<dbReference type="HOGENOM" id="CLU_008255_6_0_14"/>
<dbReference type="OrthoDB" id="9801152at2"/>
<dbReference type="Proteomes" id="UP000000549">
    <property type="component" value="Chromosome"/>
</dbReference>
<dbReference type="GO" id="GO:0005829">
    <property type="term" value="C:cytosol"/>
    <property type="evidence" value="ECO:0007669"/>
    <property type="project" value="TreeGrafter"/>
</dbReference>
<dbReference type="GO" id="GO:0005524">
    <property type="term" value="F:ATP binding"/>
    <property type="evidence" value="ECO:0007669"/>
    <property type="project" value="UniProtKB-UniRule"/>
</dbReference>
<dbReference type="GO" id="GO:0004824">
    <property type="term" value="F:lysine-tRNA ligase activity"/>
    <property type="evidence" value="ECO:0007669"/>
    <property type="project" value="UniProtKB-UniRule"/>
</dbReference>
<dbReference type="GO" id="GO:0000287">
    <property type="term" value="F:magnesium ion binding"/>
    <property type="evidence" value="ECO:0007669"/>
    <property type="project" value="UniProtKB-UniRule"/>
</dbReference>
<dbReference type="GO" id="GO:0000049">
    <property type="term" value="F:tRNA binding"/>
    <property type="evidence" value="ECO:0007669"/>
    <property type="project" value="TreeGrafter"/>
</dbReference>
<dbReference type="GO" id="GO:0006430">
    <property type="term" value="P:lysyl-tRNA aminoacylation"/>
    <property type="evidence" value="ECO:0007669"/>
    <property type="project" value="UniProtKB-UniRule"/>
</dbReference>
<dbReference type="CDD" id="cd00775">
    <property type="entry name" value="LysRS_core"/>
    <property type="match status" value="1"/>
</dbReference>
<dbReference type="CDD" id="cd04322">
    <property type="entry name" value="LysRS_N"/>
    <property type="match status" value="1"/>
</dbReference>
<dbReference type="Gene3D" id="3.30.930.10">
    <property type="entry name" value="Bira Bifunctional Protein, Domain 2"/>
    <property type="match status" value="1"/>
</dbReference>
<dbReference type="Gene3D" id="2.40.50.140">
    <property type="entry name" value="Nucleic acid-binding proteins"/>
    <property type="match status" value="1"/>
</dbReference>
<dbReference type="HAMAP" id="MF_00252">
    <property type="entry name" value="Lys_tRNA_synth_class2"/>
    <property type="match status" value="1"/>
</dbReference>
<dbReference type="InterPro" id="IPR004364">
    <property type="entry name" value="Aa-tRNA-synt_II"/>
</dbReference>
<dbReference type="InterPro" id="IPR006195">
    <property type="entry name" value="aa-tRNA-synth_II"/>
</dbReference>
<dbReference type="InterPro" id="IPR045864">
    <property type="entry name" value="aa-tRNA-synth_II/BPL/LPL"/>
</dbReference>
<dbReference type="InterPro" id="IPR002313">
    <property type="entry name" value="Lys-tRNA-ligase_II"/>
</dbReference>
<dbReference type="InterPro" id="IPR044136">
    <property type="entry name" value="Lys-tRNA-ligase_II_N"/>
</dbReference>
<dbReference type="InterPro" id="IPR018149">
    <property type="entry name" value="Lys-tRNA-synth_II_C"/>
</dbReference>
<dbReference type="InterPro" id="IPR012340">
    <property type="entry name" value="NA-bd_OB-fold"/>
</dbReference>
<dbReference type="InterPro" id="IPR004365">
    <property type="entry name" value="NA-bd_OB_tRNA"/>
</dbReference>
<dbReference type="NCBIfam" id="TIGR00499">
    <property type="entry name" value="lysS_bact"/>
    <property type="match status" value="1"/>
</dbReference>
<dbReference type="NCBIfam" id="NF001756">
    <property type="entry name" value="PRK00484.1"/>
    <property type="match status" value="1"/>
</dbReference>
<dbReference type="PANTHER" id="PTHR42918:SF15">
    <property type="entry name" value="LYSINE--TRNA LIGASE, CHLOROPLASTIC_MITOCHONDRIAL"/>
    <property type="match status" value="1"/>
</dbReference>
<dbReference type="PANTHER" id="PTHR42918">
    <property type="entry name" value="LYSYL-TRNA SYNTHETASE"/>
    <property type="match status" value="1"/>
</dbReference>
<dbReference type="Pfam" id="PF00152">
    <property type="entry name" value="tRNA-synt_2"/>
    <property type="match status" value="1"/>
</dbReference>
<dbReference type="Pfam" id="PF01336">
    <property type="entry name" value="tRNA_anti-codon"/>
    <property type="match status" value="1"/>
</dbReference>
<dbReference type="PRINTS" id="PR00982">
    <property type="entry name" value="TRNASYNTHLYS"/>
</dbReference>
<dbReference type="SUPFAM" id="SSF55681">
    <property type="entry name" value="Class II aaRS and biotin synthetases"/>
    <property type="match status" value="1"/>
</dbReference>
<dbReference type="SUPFAM" id="SSF50249">
    <property type="entry name" value="Nucleic acid-binding proteins"/>
    <property type="match status" value="1"/>
</dbReference>
<dbReference type="PROSITE" id="PS50862">
    <property type="entry name" value="AA_TRNA_LIGASE_II"/>
    <property type="match status" value="1"/>
</dbReference>
<proteinExistence type="inferred from homology"/>
<accession>Q4A5F3</accession>